<name>GCSPA_FRATH</name>
<gene>
    <name evidence="1" type="primary">gcvPA</name>
    <name type="ordered locus">FTL_0479</name>
</gene>
<proteinExistence type="inferred from homology"/>
<dbReference type="EC" id="1.4.4.2" evidence="1"/>
<dbReference type="EMBL" id="AM233362">
    <property type="protein sequence ID" value="CAJ78919.1"/>
    <property type="molecule type" value="Genomic_DNA"/>
</dbReference>
<dbReference type="RefSeq" id="WP_004336876.1">
    <property type="nucleotide sequence ID" value="NZ_CP009694.1"/>
</dbReference>
<dbReference type="SMR" id="Q2A4V1"/>
<dbReference type="KEGG" id="ftl:FTL_0479"/>
<dbReference type="Proteomes" id="UP000001944">
    <property type="component" value="Chromosome"/>
</dbReference>
<dbReference type="GO" id="GO:0004375">
    <property type="term" value="F:glycine dehydrogenase (decarboxylating) activity"/>
    <property type="evidence" value="ECO:0007669"/>
    <property type="project" value="UniProtKB-EC"/>
</dbReference>
<dbReference type="GO" id="GO:0019464">
    <property type="term" value="P:glycine decarboxylation via glycine cleavage system"/>
    <property type="evidence" value="ECO:0007669"/>
    <property type="project" value="UniProtKB-UniRule"/>
</dbReference>
<dbReference type="GO" id="GO:0009116">
    <property type="term" value="P:nucleoside metabolic process"/>
    <property type="evidence" value="ECO:0007669"/>
    <property type="project" value="InterPro"/>
</dbReference>
<dbReference type="CDD" id="cd00613">
    <property type="entry name" value="GDC-P"/>
    <property type="match status" value="1"/>
</dbReference>
<dbReference type="Gene3D" id="3.90.1150.10">
    <property type="entry name" value="Aspartate Aminotransferase, domain 1"/>
    <property type="match status" value="1"/>
</dbReference>
<dbReference type="Gene3D" id="3.40.640.10">
    <property type="entry name" value="Type I PLP-dependent aspartate aminotransferase-like (Major domain)"/>
    <property type="match status" value="1"/>
</dbReference>
<dbReference type="HAMAP" id="MF_00712">
    <property type="entry name" value="GcvPA"/>
    <property type="match status" value="1"/>
</dbReference>
<dbReference type="InterPro" id="IPR023010">
    <property type="entry name" value="GcvPA"/>
</dbReference>
<dbReference type="InterPro" id="IPR049315">
    <property type="entry name" value="GDC-P_N"/>
</dbReference>
<dbReference type="InterPro" id="IPR020581">
    <property type="entry name" value="GDC_P"/>
</dbReference>
<dbReference type="InterPro" id="IPR015424">
    <property type="entry name" value="PyrdxlP-dep_Trfase"/>
</dbReference>
<dbReference type="InterPro" id="IPR015421">
    <property type="entry name" value="PyrdxlP-dep_Trfase_major"/>
</dbReference>
<dbReference type="InterPro" id="IPR015422">
    <property type="entry name" value="PyrdxlP-dep_Trfase_small"/>
</dbReference>
<dbReference type="NCBIfam" id="NF001696">
    <property type="entry name" value="PRK00451.1"/>
    <property type="match status" value="1"/>
</dbReference>
<dbReference type="PANTHER" id="PTHR42806">
    <property type="entry name" value="GLYCINE CLEAVAGE SYSTEM P-PROTEIN"/>
    <property type="match status" value="1"/>
</dbReference>
<dbReference type="PANTHER" id="PTHR42806:SF1">
    <property type="entry name" value="GLYCINE DEHYDROGENASE (DECARBOXYLATING)"/>
    <property type="match status" value="1"/>
</dbReference>
<dbReference type="Pfam" id="PF02347">
    <property type="entry name" value="GDC-P"/>
    <property type="match status" value="1"/>
</dbReference>
<dbReference type="PIRSF" id="PIRSF006815">
    <property type="entry name" value="GcvPA"/>
    <property type="match status" value="1"/>
</dbReference>
<dbReference type="SUPFAM" id="SSF53383">
    <property type="entry name" value="PLP-dependent transferases"/>
    <property type="match status" value="1"/>
</dbReference>
<comment type="function">
    <text evidence="1">The glycine cleavage system catalyzes the degradation of glycine. The P protein binds the alpha-amino group of glycine through its pyridoxal phosphate cofactor; CO(2) is released and the remaining methylamine moiety is then transferred to the lipoamide cofactor of the H protein.</text>
</comment>
<comment type="catalytic activity">
    <reaction evidence="1">
        <text>N(6)-[(R)-lipoyl]-L-lysyl-[glycine-cleavage complex H protein] + glycine + H(+) = N(6)-[(R)-S(8)-aminomethyldihydrolipoyl]-L-lysyl-[glycine-cleavage complex H protein] + CO2</text>
        <dbReference type="Rhea" id="RHEA:24304"/>
        <dbReference type="Rhea" id="RHEA-COMP:10494"/>
        <dbReference type="Rhea" id="RHEA-COMP:10495"/>
        <dbReference type="ChEBI" id="CHEBI:15378"/>
        <dbReference type="ChEBI" id="CHEBI:16526"/>
        <dbReference type="ChEBI" id="CHEBI:57305"/>
        <dbReference type="ChEBI" id="CHEBI:83099"/>
        <dbReference type="ChEBI" id="CHEBI:83143"/>
        <dbReference type="EC" id="1.4.4.2"/>
    </reaction>
</comment>
<comment type="subunit">
    <text evidence="1">The glycine cleavage system is composed of four proteins: P, T, L and H. In this organism, the P 'protein' is a heterodimer of two subunits.</text>
</comment>
<comment type="similarity">
    <text evidence="1">Belongs to the GcvP family. N-terminal subunit subfamily.</text>
</comment>
<evidence type="ECO:0000255" key="1">
    <source>
        <dbReference type="HAMAP-Rule" id="MF_00712"/>
    </source>
</evidence>
<accession>Q2A4V1</accession>
<feature type="chain" id="PRO_1000045651" description="Probable glycine dehydrogenase (decarboxylating) subunit 1">
    <location>
        <begin position="1"/>
        <end position="455"/>
    </location>
</feature>
<sequence>MSFIPHKLEQIKKMLDTIGASSVDQLFDEIPRHLRADTLNIKDGINEIQLANLMRKRANKNHHNINYIGAGAYSHHIPAAIWDIVARGEFYTAYTPYQAEASQGGLQVIYEFQTMMAGLTGMDASNASMYDGATALAESVLMAIRSNKKAKSQKVLIAEALHPTYLRVLETITKHQGIEFDIVNLDSKNGKTDVTKLEDFANTNYAAVVIQSPNFLGQLADVDGITNWAHKHGALVIAVTNPMSLAILKSPAEWGDNGADIVCGEGQPIGVPLASGGPYFGFMTCKMAHVRQMPGRIVGRTVDLDGNEGFCLTLQAREQHIRRAKATSNICTNQGLMVTAATIYMSLLGAEGLERVASISHENTQTLATELAKINGVSIRFNSAFFNEVVIDLPVNAETFVTEMEKEAIDAGYFLGEYHSDLANSIMVCATEIHTSEDIKEYIEATKKVLARIGG</sequence>
<organism>
    <name type="scientific">Francisella tularensis subsp. holarctica (strain LVS)</name>
    <dbReference type="NCBI Taxonomy" id="376619"/>
    <lineage>
        <taxon>Bacteria</taxon>
        <taxon>Pseudomonadati</taxon>
        <taxon>Pseudomonadota</taxon>
        <taxon>Gammaproteobacteria</taxon>
        <taxon>Thiotrichales</taxon>
        <taxon>Francisellaceae</taxon>
        <taxon>Francisella</taxon>
    </lineage>
</organism>
<reference key="1">
    <citation type="submission" date="2006-03" db="EMBL/GenBank/DDBJ databases">
        <title>Complete genome sequence of Francisella tularensis LVS (Live Vaccine Strain).</title>
        <authorList>
            <person name="Chain P."/>
            <person name="Larimer F."/>
            <person name="Land M."/>
            <person name="Stilwagen S."/>
            <person name="Larsson P."/>
            <person name="Bearden S."/>
            <person name="Chu M."/>
            <person name="Oyston P."/>
            <person name="Forsman M."/>
            <person name="Andersson S."/>
            <person name="Lindler L."/>
            <person name="Titball R."/>
            <person name="Garcia E."/>
        </authorList>
    </citation>
    <scope>NUCLEOTIDE SEQUENCE [LARGE SCALE GENOMIC DNA]</scope>
    <source>
        <strain>LVS</strain>
    </source>
</reference>
<protein>
    <recommendedName>
        <fullName evidence="1">Probable glycine dehydrogenase (decarboxylating) subunit 1</fullName>
        <ecNumber evidence="1">1.4.4.2</ecNumber>
    </recommendedName>
    <alternativeName>
        <fullName evidence="1">Glycine cleavage system P-protein subunit 1</fullName>
    </alternativeName>
    <alternativeName>
        <fullName evidence="1">Glycine decarboxylase subunit 1</fullName>
    </alternativeName>
    <alternativeName>
        <fullName evidence="1">Glycine dehydrogenase (aminomethyl-transferring) subunit 1</fullName>
    </alternativeName>
</protein>
<keyword id="KW-0560">Oxidoreductase</keyword>
<keyword id="KW-1185">Reference proteome</keyword>